<organism>
    <name type="scientific">Bradyrhizobium sp. (strain BTAi1 / ATCC BAA-1182)</name>
    <dbReference type="NCBI Taxonomy" id="288000"/>
    <lineage>
        <taxon>Bacteria</taxon>
        <taxon>Pseudomonadati</taxon>
        <taxon>Pseudomonadota</taxon>
        <taxon>Alphaproteobacteria</taxon>
        <taxon>Hyphomicrobiales</taxon>
        <taxon>Nitrobacteraceae</taxon>
        <taxon>Bradyrhizobium</taxon>
    </lineage>
</organism>
<protein>
    <recommendedName>
        <fullName evidence="1">Tryptophan 2,3-dioxygenase</fullName>
        <shortName evidence="1">TDO</shortName>
        <ecNumber evidence="1">1.13.11.11</ecNumber>
    </recommendedName>
    <alternativeName>
        <fullName evidence="1">Tryptamin 2,3-dioxygenase</fullName>
    </alternativeName>
    <alternativeName>
        <fullName evidence="1">Tryptophan oxygenase</fullName>
        <shortName evidence="1">TO</shortName>
        <shortName evidence="1">TRPO</shortName>
    </alternativeName>
    <alternativeName>
        <fullName evidence="1">Tryptophan pyrrolase</fullName>
    </alternativeName>
    <alternativeName>
        <fullName evidence="1">Tryptophanase</fullName>
    </alternativeName>
</protein>
<reference key="1">
    <citation type="journal article" date="2007" name="Science">
        <title>Legumes symbioses: absence of nod genes in photosynthetic bradyrhizobia.</title>
        <authorList>
            <person name="Giraud E."/>
            <person name="Moulin L."/>
            <person name="Vallenet D."/>
            <person name="Barbe V."/>
            <person name="Cytryn E."/>
            <person name="Avarre J.-C."/>
            <person name="Jaubert M."/>
            <person name="Simon D."/>
            <person name="Cartieaux F."/>
            <person name="Prin Y."/>
            <person name="Bena G."/>
            <person name="Hannibal L."/>
            <person name="Fardoux J."/>
            <person name="Kojadinovic M."/>
            <person name="Vuillet L."/>
            <person name="Lajus A."/>
            <person name="Cruveiller S."/>
            <person name="Rouy Z."/>
            <person name="Mangenot S."/>
            <person name="Segurens B."/>
            <person name="Dossat C."/>
            <person name="Franck W.L."/>
            <person name="Chang W.-S."/>
            <person name="Saunders E."/>
            <person name="Bruce D."/>
            <person name="Richardson P."/>
            <person name="Normand P."/>
            <person name="Dreyfus B."/>
            <person name="Pignol D."/>
            <person name="Stacey G."/>
            <person name="Emerich D."/>
            <person name="Vermeglio A."/>
            <person name="Medigue C."/>
            <person name="Sadowsky M."/>
        </authorList>
    </citation>
    <scope>NUCLEOTIDE SEQUENCE [LARGE SCALE GENOMIC DNA]</scope>
    <source>
        <strain>BTAi1 / ATCC BAA-1182</strain>
    </source>
</reference>
<gene>
    <name evidence="1" type="primary">kynA</name>
    <name type="ordered locus">BBta_6511</name>
</gene>
<keyword id="KW-0223">Dioxygenase</keyword>
<keyword id="KW-0349">Heme</keyword>
<keyword id="KW-0408">Iron</keyword>
<keyword id="KW-0479">Metal-binding</keyword>
<keyword id="KW-0560">Oxidoreductase</keyword>
<keyword id="KW-1185">Reference proteome</keyword>
<keyword id="KW-0823">Tryptophan catabolism</keyword>
<name>T23O_BRASB</name>
<sequence length="279" mass="32154">MSNAPYDPATEGARMNFKGRMSYGDYLMLDRLLDAQAPLSSAHDELLFIIQHQTSELWMKLAIHEIKAAMAAIAKDDVQPAFKMLARVSRIFEQLNGAWDVLRTMTPSEYTLFRDKLGESSGFQSFQYRSIEFLLGNRNLAMLRPHAHHPELTAELEAILAKPSLYDEALKLLARRGFFIGADGQRTDWRGTRSESPEVAAAWTSVYRDPQRHWELYELAEKLVDFEDYFRRWRFNHVTTVERIIGFKTGTGGTSGVNYLRKMLEIVLFPELWKLRTGL</sequence>
<accession>A5EQH6</accession>
<evidence type="ECO:0000255" key="1">
    <source>
        <dbReference type="HAMAP-Rule" id="MF_01972"/>
    </source>
</evidence>
<feature type="chain" id="PRO_0000360094" description="Tryptophan 2,3-dioxygenase">
    <location>
        <begin position="1"/>
        <end position="279"/>
    </location>
</feature>
<feature type="binding site" evidence="1">
    <location>
        <begin position="48"/>
        <end position="52"/>
    </location>
    <ligand>
        <name>substrate</name>
    </ligand>
</feature>
<feature type="binding site" evidence="1">
    <location>
        <position position="110"/>
    </location>
    <ligand>
        <name>substrate</name>
    </ligand>
</feature>
<feature type="binding site" evidence="1">
    <location>
        <position position="114"/>
    </location>
    <ligand>
        <name>substrate</name>
    </ligand>
</feature>
<feature type="binding site" description="axial binding residue" evidence="1">
    <location>
        <position position="237"/>
    </location>
    <ligand>
        <name>heme</name>
        <dbReference type="ChEBI" id="CHEBI:30413"/>
    </ligand>
    <ligandPart>
        <name>Fe</name>
        <dbReference type="ChEBI" id="CHEBI:18248"/>
    </ligandPart>
</feature>
<feature type="binding site" evidence="1">
    <location>
        <position position="251"/>
    </location>
    <ligand>
        <name>substrate</name>
    </ligand>
</feature>
<proteinExistence type="inferred from homology"/>
<comment type="function">
    <text evidence="1">Heme-dependent dioxygenase that catalyzes the oxidative cleavage of the L-tryptophan (L-Trp) pyrrole ring and converts L-tryptophan to N-formyl-L-kynurenine. Catalyzes the oxidative cleavage of the indole moiety.</text>
</comment>
<comment type="catalytic activity">
    <reaction evidence="1">
        <text>L-tryptophan + O2 = N-formyl-L-kynurenine</text>
        <dbReference type="Rhea" id="RHEA:24536"/>
        <dbReference type="ChEBI" id="CHEBI:15379"/>
        <dbReference type="ChEBI" id="CHEBI:57912"/>
        <dbReference type="ChEBI" id="CHEBI:58629"/>
        <dbReference type="EC" id="1.13.11.11"/>
    </reaction>
</comment>
<comment type="cofactor">
    <cofactor evidence="1">
        <name>heme</name>
        <dbReference type="ChEBI" id="CHEBI:30413"/>
    </cofactor>
    <text evidence="1">Binds 1 heme group per subunit.</text>
</comment>
<comment type="pathway">
    <text evidence="1">Amino-acid degradation; L-tryptophan degradation via kynurenine pathway; L-kynurenine from L-tryptophan: step 1/2.</text>
</comment>
<comment type="subunit">
    <text evidence="1">Homotetramer.</text>
</comment>
<comment type="similarity">
    <text evidence="1">Belongs to the tryptophan 2,3-dioxygenase family.</text>
</comment>
<dbReference type="EC" id="1.13.11.11" evidence="1"/>
<dbReference type="EMBL" id="CP000494">
    <property type="protein sequence ID" value="ABQ38420.1"/>
    <property type="molecule type" value="Genomic_DNA"/>
</dbReference>
<dbReference type="RefSeq" id="WP_012046361.1">
    <property type="nucleotide sequence ID" value="NC_009485.1"/>
</dbReference>
<dbReference type="SMR" id="A5EQH6"/>
<dbReference type="STRING" id="288000.BBta_6511"/>
<dbReference type="KEGG" id="bbt:BBta_6511"/>
<dbReference type="eggNOG" id="COG3483">
    <property type="taxonomic scope" value="Bacteria"/>
</dbReference>
<dbReference type="HOGENOM" id="CLU_063240_0_0_5"/>
<dbReference type="OrthoDB" id="9776847at2"/>
<dbReference type="UniPathway" id="UPA00333">
    <property type="reaction ID" value="UER00453"/>
</dbReference>
<dbReference type="Proteomes" id="UP000000246">
    <property type="component" value="Chromosome"/>
</dbReference>
<dbReference type="GO" id="GO:0020037">
    <property type="term" value="F:heme binding"/>
    <property type="evidence" value="ECO:0000250"/>
    <property type="project" value="UniProtKB"/>
</dbReference>
<dbReference type="GO" id="GO:0046872">
    <property type="term" value="F:metal ion binding"/>
    <property type="evidence" value="ECO:0007669"/>
    <property type="project" value="UniProtKB-KW"/>
</dbReference>
<dbReference type="GO" id="GO:0004833">
    <property type="term" value="F:tryptophan 2,3-dioxygenase activity"/>
    <property type="evidence" value="ECO:0000250"/>
    <property type="project" value="UniProtKB"/>
</dbReference>
<dbReference type="GO" id="GO:0019442">
    <property type="term" value="P:L-tryptophan catabolic process to acetyl-CoA"/>
    <property type="evidence" value="ECO:0007669"/>
    <property type="project" value="TreeGrafter"/>
</dbReference>
<dbReference type="GO" id="GO:0019441">
    <property type="term" value="P:L-tryptophan catabolic process to kynurenine"/>
    <property type="evidence" value="ECO:0000250"/>
    <property type="project" value="UniProtKB"/>
</dbReference>
<dbReference type="FunFam" id="1.20.58.480:FF:000001">
    <property type="entry name" value="Tryptophan 2,3-dioxygenase"/>
    <property type="match status" value="1"/>
</dbReference>
<dbReference type="Gene3D" id="1.20.58.480">
    <property type="match status" value="1"/>
</dbReference>
<dbReference type="HAMAP" id="MF_01972">
    <property type="entry name" value="T23O"/>
    <property type="match status" value="1"/>
</dbReference>
<dbReference type="InterPro" id="IPR037217">
    <property type="entry name" value="Trp/Indoleamine_2_3_dOase-like"/>
</dbReference>
<dbReference type="InterPro" id="IPR017485">
    <property type="entry name" value="Trp_2-3-dOase_bac"/>
</dbReference>
<dbReference type="InterPro" id="IPR004981">
    <property type="entry name" value="Trp_2_3_dOase"/>
</dbReference>
<dbReference type="NCBIfam" id="TIGR03036">
    <property type="entry name" value="trp_2_3_diox"/>
    <property type="match status" value="1"/>
</dbReference>
<dbReference type="PANTHER" id="PTHR10138">
    <property type="entry name" value="TRYPTOPHAN 2,3-DIOXYGENASE"/>
    <property type="match status" value="1"/>
</dbReference>
<dbReference type="PANTHER" id="PTHR10138:SF0">
    <property type="entry name" value="TRYPTOPHAN 2,3-DIOXYGENASE"/>
    <property type="match status" value="1"/>
</dbReference>
<dbReference type="Pfam" id="PF03301">
    <property type="entry name" value="Trp_dioxygenase"/>
    <property type="match status" value="2"/>
</dbReference>
<dbReference type="SUPFAM" id="SSF140959">
    <property type="entry name" value="Indolic compounds 2,3-dioxygenase-like"/>
    <property type="match status" value="1"/>
</dbReference>